<name>PYRG_CHLAD</name>
<sequence length="547" mass="60137">MTKYIFVTGGVVSSVGKGIGVASIGRLLKSRGFSVSVMKLDPYLNVDPGTMSPYQHGEVFVTADGAETDLDLGHYERFIDVNLSRLSNVTTGQIYSAVIAKERRGDYLGGTIQVIPHITNEIKARIGSLARSSQADVVIVEIGGTVGDIESLPFLEAIRQMRKDVGRDNILYIHVTLLPHISTGELKTKPTQHSVMALRNVGISADVILCRADRPIDDDIREKIAFFADVDVRAVIPVPTVDSIYEVPLVLEDMGLGDYLVERLGLPATPPDLEDWRSLVARIRQEKRRLPIALVGKYVELHDAYISVVEALHHAAIEQLIDVDIRWIAAEDVEREGPARLLSGVYGILVPGGFGERGIEGKIASADYARVNGIPYLGLCLGMQCATIAFARHVLGTHDVNSTEFNPQTAHPVIDLMPDQRDITEKGGTMRLGLYPCDLVPGTRAHAAYGCDRVEERHRHRFEFNNRYRAVLESAGLVISGLSPDRQLVEIIELRDHPWYVASQFHPEFQSRPGKPHPLFRGFIAAAAQTLLAGEARQLPLVESASS</sequence>
<reference key="1">
    <citation type="submission" date="2008-12" db="EMBL/GenBank/DDBJ databases">
        <title>Complete sequence of Chloroflexus aggregans DSM 9485.</title>
        <authorList>
            <consortium name="US DOE Joint Genome Institute"/>
            <person name="Lucas S."/>
            <person name="Copeland A."/>
            <person name="Lapidus A."/>
            <person name="Glavina del Rio T."/>
            <person name="Dalin E."/>
            <person name="Tice H."/>
            <person name="Pitluck S."/>
            <person name="Foster B."/>
            <person name="Larimer F."/>
            <person name="Land M."/>
            <person name="Hauser L."/>
            <person name="Kyrpides N."/>
            <person name="Mikhailova N."/>
            <person name="Bryant D.A."/>
            <person name="Richardson P."/>
        </authorList>
    </citation>
    <scope>NUCLEOTIDE SEQUENCE [LARGE SCALE GENOMIC DNA]</scope>
    <source>
        <strain>MD-66 / DSM 9485</strain>
    </source>
</reference>
<evidence type="ECO:0000255" key="1">
    <source>
        <dbReference type="HAMAP-Rule" id="MF_01227"/>
    </source>
</evidence>
<dbReference type="EC" id="6.3.4.2" evidence="1"/>
<dbReference type="EMBL" id="CP001337">
    <property type="protein sequence ID" value="ACL24644.1"/>
    <property type="molecule type" value="Genomic_DNA"/>
</dbReference>
<dbReference type="RefSeq" id="WP_015940503.1">
    <property type="nucleotide sequence ID" value="NC_011831.1"/>
</dbReference>
<dbReference type="SMR" id="B8GAQ5"/>
<dbReference type="STRING" id="326427.Cagg_1743"/>
<dbReference type="MEROPS" id="C26.964"/>
<dbReference type="KEGG" id="cag:Cagg_1743"/>
<dbReference type="eggNOG" id="COG0504">
    <property type="taxonomic scope" value="Bacteria"/>
</dbReference>
<dbReference type="HOGENOM" id="CLU_011675_5_0_0"/>
<dbReference type="OrthoDB" id="9801107at2"/>
<dbReference type="UniPathway" id="UPA00159">
    <property type="reaction ID" value="UER00277"/>
</dbReference>
<dbReference type="Proteomes" id="UP000002508">
    <property type="component" value="Chromosome"/>
</dbReference>
<dbReference type="GO" id="GO:0005829">
    <property type="term" value="C:cytosol"/>
    <property type="evidence" value="ECO:0007669"/>
    <property type="project" value="TreeGrafter"/>
</dbReference>
<dbReference type="GO" id="GO:0005524">
    <property type="term" value="F:ATP binding"/>
    <property type="evidence" value="ECO:0007669"/>
    <property type="project" value="UniProtKB-KW"/>
</dbReference>
<dbReference type="GO" id="GO:0003883">
    <property type="term" value="F:CTP synthase activity"/>
    <property type="evidence" value="ECO:0007669"/>
    <property type="project" value="UniProtKB-UniRule"/>
</dbReference>
<dbReference type="GO" id="GO:0004359">
    <property type="term" value="F:glutaminase activity"/>
    <property type="evidence" value="ECO:0007669"/>
    <property type="project" value="RHEA"/>
</dbReference>
<dbReference type="GO" id="GO:0042802">
    <property type="term" value="F:identical protein binding"/>
    <property type="evidence" value="ECO:0007669"/>
    <property type="project" value="TreeGrafter"/>
</dbReference>
<dbReference type="GO" id="GO:0046872">
    <property type="term" value="F:metal ion binding"/>
    <property type="evidence" value="ECO:0007669"/>
    <property type="project" value="UniProtKB-KW"/>
</dbReference>
<dbReference type="GO" id="GO:0044210">
    <property type="term" value="P:'de novo' CTP biosynthetic process"/>
    <property type="evidence" value="ECO:0007669"/>
    <property type="project" value="UniProtKB-UniRule"/>
</dbReference>
<dbReference type="GO" id="GO:0019856">
    <property type="term" value="P:pyrimidine nucleobase biosynthetic process"/>
    <property type="evidence" value="ECO:0007669"/>
    <property type="project" value="TreeGrafter"/>
</dbReference>
<dbReference type="CDD" id="cd03113">
    <property type="entry name" value="CTPS_N"/>
    <property type="match status" value="1"/>
</dbReference>
<dbReference type="CDD" id="cd01746">
    <property type="entry name" value="GATase1_CTP_Synthase"/>
    <property type="match status" value="1"/>
</dbReference>
<dbReference type="FunFam" id="3.40.50.300:FF:000009">
    <property type="entry name" value="CTP synthase"/>
    <property type="match status" value="1"/>
</dbReference>
<dbReference type="FunFam" id="3.40.50.880:FF:000002">
    <property type="entry name" value="CTP synthase"/>
    <property type="match status" value="1"/>
</dbReference>
<dbReference type="Gene3D" id="3.40.50.880">
    <property type="match status" value="1"/>
</dbReference>
<dbReference type="Gene3D" id="3.40.50.300">
    <property type="entry name" value="P-loop containing nucleotide triphosphate hydrolases"/>
    <property type="match status" value="1"/>
</dbReference>
<dbReference type="HAMAP" id="MF_01227">
    <property type="entry name" value="PyrG"/>
    <property type="match status" value="1"/>
</dbReference>
<dbReference type="InterPro" id="IPR029062">
    <property type="entry name" value="Class_I_gatase-like"/>
</dbReference>
<dbReference type="InterPro" id="IPR004468">
    <property type="entry name" value="CTP_synthase"/>
</dbReference>
<dbReference type="InterPro" id="IPR017456">
    <property type="entry name" value="CTP_synthase_N"/>
</dbReference>
<dbReference type="InterPro" id="IPR017926">
    <property type="entry name" value="GATASE"/>
</dbReference>
<dbReference type="InterPro" id="IPR033828">
    <property type="entry name" value="GATase1_CTP_Synthase"/>
</dbReference>
<dbReference type="InterPro" id="IPR027417">
    <property type="entry name" value="P-loop_NTPase"/>
</dbReference>
<dbReference type="NCBIfam" id="NF003792">
    <property type="entry name" value="PRK05380.1"/>
    <property type="match status" value="1"/>
</dbReference>
<dbReference type="NCBIfam" id="TIGR00337">
    <property type="entry name" value="PyrG"/>
    <property type="match status" value="1"/>
</dbReference>
<dbReference type="PANTHER" id="PTHR11550">
    <property type="entry name" value="CTP SYNTHASE"/>
    <property type="match status" value="1"/>
</dbReference>
<dbReference type="PANTHER" id="PTHR11550:SF0">
    <property type="entry name" value="CTP SYNTHASE-RELATED"/>
    <property type="match status" value="1"/>
</dbReference>
<dbReference type="Pfam" id="PF06418">
    <property type="entry name" value="CTP_synth_N"/>
    <property type="match status" value="1"/>
</dbReference>
<dbReference type="Pfam" id="PF00117">
    <property type="entry name" value="GATase"/>
    <property type="match status" value="1"/>
</dbReference>
<dbReference type="SUPFAM" id="SSF52317">
    <property type="entry name" value="Class I glutamine amidotransferase-like"/>
    <property type="match status" value="1"/>
</dbReference>
<dbReference type="SUPFAM" id="SSF52540">
    <property type="entry name" value="P-loop containing nucleoside triphosphate hydrolases"/>
    <property type="match status" value="1"/>
</dbReference>
<dbReference type="PROSITE" id="PS51273">
    <property type="entry name" value="GATASE_TYPE_1"/>
    <property type="match status" value="1"/>
</dbReference>
<feature type="chain" id="PRO_1000164934" description="CTP synthase">
    <location>
        <begin position="1"/>
        <end position="547"/>
    </location>
</feature>
<feature type="domain" description="Glutamine amidotransferase type-1" evidence="1">
    <location>
        <begin position="291"/>
        <end position="533"/>
    </location>
</feature>
<feature type="region of interest" description="Amidoligase domain" evidence="1">
    <location>
        <begin position="1"/>
        <end position="266"/>
    </location>
</feature>
<feature type="active site" description="Nucleophile; for glutamine hydrolysis" evidence="1">
    <location>
        <position position="380"/>
    </location>
</feature>
<feature type="active site" evidence="1">
    <location>
        <position position="506"/>
    </location>
</feature>
<feature type="active site" evidence="1">
    <location>
        <position position="508"/>
    </location>
</feature>
<feature type="binding site" evidence="1">
    <location>
        <position position="13"/>
    </location>
    <ligand>
        <name>CTP</name>
        <dbReference type="ChEBI" id="CHEBI:37563"/>
        <note>allosteric inhibitor</note>
    </ligand>
</feature>
<feature type="binding site" evidence="1">
    <location>
        <position position="13"/>
    </location>
    <ligand>
        <name>UTP</name>
        <dbReference type="ChEBI" id="CHEBI:46398"/>
    </ligand>
</feature>
<feature type="binding site" evidence="1">
    <location>
        <begin position="14"/>
        <end position="19"/>
    </location>
    <ligand>
        <name>ATP</name>
        <dbReference type="ChEBI" id="CHEBI:30616"/>
    </ligand>
</feature>
<feature type="binding site" evidence="1">
    <location>
        <position position="54"/>
    </location>
    <ligand>
        <name>L-glutamine</name>
        <dbReference type="ChEBI" id="CHEBI:58359"/>
    </ligand>
</feature>
<feature type="binding site" evidence="1">
    <location>
        <position position="71"/>
    </location>
    <ligand>
        <name>ATP</name>
        <dbReference type="ChEBI" id="CHEBI:30616"/>
    </ligand>
</feature>
<feature type="binding site" evidence="1">
    <location>
        <position position="71"/>
    </location>
    <ligand>
        <name>Mg(2+)</name>
        <dbReference type="ChEBI" id="CHEBI:18420"/>
    </ligand>
</feature>
<feature type="binding site" evidence="1">
    <location>
        <position position="141"/>
    </location>
    <ligand>
        <name>Mg(2+)</name>
        <dbReference type="ChEBI" id="CHEBI:18420"/>
    </ligand>
</feature>
<feature type="binding site" evidence="1">
    <location>
        <begin position="148"/>
        <end position="150"/>
    </location>
    <ligand>
        <name>CTP</name>
        <dbReference type="ChEBI" id="CHEBI:37563"/>
        <note>allosteric inhibitor</note>
    </ligand>
</feature>
<feature type="binding site" evidence="1">
    <location>
        <begin position="187"/>
        <end position="192"/>
    </location>
    <ligand>
        <name>CTP</name>
        <dbReference type="ChEBI" id="CHEBI:37563"/>
        <note>allosteric inhibitor</note>
    </ligand>
</feature>
<feature type="binding site" evidence="1">
    <location>
        <begin position="187"/>
        <end position="192"/>
    </location>
    <ligand>
        <name>UTP</name>
        <dbReference type="ChEBI" id="CHEBI:46398"/>
    </ligand>
</feature>
<feature type="binding site" evidence="1">
    <location>
        <position position="223"/>
    </location>
    <ligand>
        <name>CTP</name>
        <dbReference type="ChEBI" id="CHEBI:37563"/>
        <note>allosteric inhibitor</note>
    </ligand>
</feature>
<feature type="binding site" evidence="1">
    <location>
        <position position="223"/>
    </location>
    <ligand>
        <name>UTP</name>
        <dbReference type="ChEBI" id="CHEBI:46398"/>
    </ligand>
</feature>
<feature type="binding site" evidence="1">
    <location>
        <position position="353"/>
    </location>
    <ligand>
        <name>L-glutamine</name>
        <dbReference type="ChEBI" id="CHEBI:58359"/>
    </ligand>
</feature>
<feature type="binding site" evidence="1">
    <location>
        <begin position="381"/>
        <end position="384"/>
    </location>
    <ligand>
        <name>L-glutamine</name>
        <dbReference type="ChEBI" id="CHEBI:58359"/>
    </ligand>
</feature>
<feature type="binding site" evidence="1">
    <location>
        <position position="404"/>
    </location>
    <ligand>
        <name>L-glutamine</name>
        <dbReference type="ChEBI" id="CHEBI:58359"/>
    </ligand>
</feature>
<feature type="binding site" evidence="1">
    <location>
        <position position="461"/>
    </location>
    <ligand>
        <name>L-glutamine</name>
        <dbReference type="ChEBI" id="CHEBI:58359"/>
    </ligand>
</feature>
<organism>
    <name type="scientific">Chloroflexus aggregans (strain MD-66 / DSM 9485)</name>
    <dbReference type="NCBI Taxonomy" id="326427"/>
    <lineage>
        <taxon>Bacteria</taxon>
        <taxon>Bacillati</taxon>
        <taxon>Chloroflexota</taxon>
        <taxon>Chloroflexia</taxon>
        <taxon>Chloroflexales</taxon>
        <taxon>Chloroflexineae</taxon>
        <taxon>Chloroflexaceae</taxon>
        <taxon>Chloroflexus</taxon>
    </lineage>
</organism>
<comment type="function">
    <text evidence="1">Catalyzes the ATP-dependent amination of UTP to CTP with either L-glutamine or ammonia as the source of nitrogen. Regulates intracellular CTP levels through interactions with the four ribonucleotide triphosphates.</text>
</comment>
<comment type="catalytic activity">
    <reaction evidence="1">
        <text>UTP + L-glutamine + ATP + H2O = CTP + L-glutamate + ADP + phosphate + 2 H(+)</text>
        <dbReference type="Rhea" id="RHEA:26426"/>
        <dbReference type="ChEBI" id="CHEBI:15377"/>
        <dbReference type="ChEBI" id="CHEBI:15378"/>
        <dbReference type="ChEBI" id="CHEBI:29985"/>
        <dbReference type="ChEBI" id="CHEBI:30616"/>
        <dbReference type="ChEBI" id="CHEBI:37563"/>
        <dbReference type="ChEBI" id="CHEBI:43474"/>
        <dbReference type="ChEBI" id="CHEBI:46398"/>
        <dbReference type="ChEBI" id="CHEBI:58359"/>
        <dbReference type="ChEBI" id="CHEBI:456216"/>
        <dbReference type="EC" id="6.3.4.2"/>
    </reaction>
</comment>
<comment type="catalytic activity">
    <reaction evidence="1">
        <text>L-glutamine + H2O = L-glutamate + NH4(+)</text>
        <dbReference type="Rhea" id="RHEA:15889"/>
        <dbReference type="ChEBI" id="CHEBI:15377"/>
        <dbReference type="ChEBI" id="CHEBI:28938"/>
        <dbReference type="ChEBI" id="CHEBI:29985"/>
        <dbReference type="ChEBI" id="CHEBI:58359"/>
    </reaction>
</comment>
<comment type="catalytic activity">
    <reaction evidence="1">
        <text>UTP + NH4(+) + ATP = CTP + ADP + phosphate + 2 H(+)</text>
        <dbReference type="Rhea" id="RHEA:16597"/>
        <dbReference type="ChEBI" id="CHEBI:15378"/>
        <dbReference type="ChEBI" id="CHEBI:28938"/>
        <dbReference type="ChEBI" id="CHEBI:30616"/>
        <dbReference type="ChEBI" id="CHEBI:37563"/>
        <dbReference type="ChEBI" id="CHEBI:43474"/>
        <dbReference type="ChEBI" id="CHEBI:46398"/>
        <dbReference type="ChEBI" id="CHEBI:456216"/>
    </reaction>
</comment>
<comment type="activity regulation">
    <text evidence="1">Allosterically activated by GTP, when glutamine is the substrate; GTP has no effect on the reaction when ammonia is the substrate. The allosteric effector GTP functions by stabilizing the protein conformation that binds the tetrahedral intermediate(s) formed during glutamine hydrolysis. Inhibited by the product CTP, via allosteric rather than competitive inhibition.</text>
</comment>
<comment type="pathway">
    <text evidence="1">Pyrimidine metabolism; CTP biosynthesis via de novo pathway; CTP from UDP: step 2/2.</text>
</comment>
<comment type="subunit">
    <text evidence="1">Homotetramer.</text>
</comment>
<comment type="miscellaneous">
    <text evidence="1">CTPSs have evolved a hybrid strategy for distinguishing between UTP and CTP. The overlapping regions of the product feedback inhibitory and substrate sites recognize a common feature in both compounds, the triphosphate moiety. To differentiate isosteric substrate and product pyrimidine rings, an additional pocket far from the expected kinase/ligase catalytic site, specifically recognizes the cytosine and ribose portions of the product inhibitor.</text>
</comment>
<comment type="similarity">
    <text evidence="1">Belongs to the CTP synthase family.</text>
</comment>
<protein>
    <recommendedName>
        <fullName evidence="1">CTP synthase</fullName>
        <ecNumber evidence="1">6.3.4.2</ecNumber>
    </recommendedName>
    <alternativeName>
        <fullName evidence="1">Cytidine 5'-triphosphate synthase</fullName>
    </alternativeName>
    <alternativeName>
        <fullName evidence="1">Cytidine triphosphate synthetase</fullName>
        <shortName evidence="1">CTP synthetase</shortName>
        <shortName evidence="1">CTPS</shortName>
    </alternativeName>
    <alternativeName>
        <fullName evidence="1">UTP--ammonia ligase</fullName>
    </alternativeName>
</protein>
<keyword id="KW-0067">ATP-binding</keyword>
<keyword id="KW-0315">Glutamine amidotransferase</keyword>
<keyword id="KW-0436">Ligase</keyword>
<keyword id="KW-0460">Magnesium</keyword>
<keyword id="KW-0479">Metal-binding</keyword>
<keyword id="KW-0547">Nucleotide-binding</keyword>
<keyword id="KW-0665">Pyrimidine biosynthesis</keyword>
<gene>
    <name evidence="1" type="primary">pyrG</name>
    <name type="ordered locus">Cagg_1743</name>
</gene>
<proteinExistence type="inferred from homology"/>
<accession>B8GAQ5</accession>